<accession>Q6AYH9</accession>
<reference key="1">
    <citation type="journal article" date="2004" name="Genome Res.">
        <title>The status, quality, and expansion of the NIH full-length cDNA project: the Mammalian Gene Collection (MGC).</title>
        <authorList>
            <consortium name="The MGC Project Team"/>
        </authorList>
    </citation>
    <scope>NUCLEOTIDE SEQUENCE [LARGE SCALE MRNA]</scope>
    <source>
        <tissue>Testis</tissue>
    </source>
</reference>
<reference key="2">
    <citation type="journal article" date="2012" name="Nat. Commun.">
        <title>Quantitative maps of protein phosphorylation sites across 14 different rat organs and tissues.</title>
        <authorList>
            <person name="Lundby A."/>
            <person name="Secher A."/>
            <person name="Lage K."/>
            <person name="Nordsborg N.B."/>
            <person name="Dmytriyev A."/>
            <person name="Lundby C."/>
            <person name="Olsen J.V."/>
        </authorList>
    </citation>
    <scope>PHOSPHORYLATION [LARGE SCALE ANALYSIS] AT SER-349; THR-462; SER-465 AND SER-488</scope>
    <scope>IDENTIFICATION BY MASS SPECTROMETRY [LARGE SCALE ANALYSIS]</scope>
</reference>
<gene>
    <name type="primary">Dnaaf1</name>
    <name type="synonym">Lrrc50</name>
</gene>
<evidence type="ECO:0000250" key="1"/>
<evidence type="ECO:0000256" key="2">
    <source>
        <dbReference type="SAM" id="MobiDB-lite"/>
    </source>
</evidence>
<evidence type="ECO:0000305" key="3"/>
<evidence type="ECO:0007744" key="4">
    <source>
    </source>
</evidence>
<protein>
    <recommendedName>
        <fullName>Dynein axonemal assembly factor 1</fullName>
    </recommendedName>
    <alternativeName>
        <fullName>Leucine-rich repeat-containing protein 50</fullName>
    </alternativeName>
</protein>
<keyword id="KW-0966">Cell projection</keyword>
<keyword id="KW-0969">Cilium</keyword>
<keyword id="KW-0433">Leucine-rich repeat</keyword>
<keyword id="KW-0597">Phosphoprotein</keyword>
<keyword id="KW-1185">Reference proteome</keyword>
<keyword id="KW-0677">Repeat</keyword>
<name>DAAF1_RAT</name>
<dbReference type="EMBL" id="BC079038">
    <property type="protein sequence ID" value="AAH79038.1"/>
    <property type="molecule type" value="mRNA"/>
</dbReference>
<dbReference type="RefSeq" id="NP_001014176.1">
    <property type="nucleotide sequence ID" value="NM_001014154.1"/>
</dbReference>
<dbReference type="SMR" id="Q6AYH9"/>
<dbReference type="FunCoup" id="Q6AYH9">
    <property type="interactions" value="154"/>
</dbReference>
<dbReference type="STRING" id="10116.ENSRNOP00000073360"/>
<dbReference type="GlyGen" id="Q6AYH9">
    <property type="glycosylation" value="2 sites"/>
</dbReference>
<dbReference type="iPTMnet" id="Q6AYH9"/>
<dbReference type="PhosphoSitePlus" id="Q6AYH9"/>
<dbReference type="PaxDb" id="10116-ENSRNOP00000020917"/>
<dbReference type="Ensembl" id="ENSRNOT00000020917.5">
    <property type="protein sequence ID" value="ENSRNOP00000020917.3"/>
    <property type="gene ID" value="ENSRNOG00000015590.6"/>
</dbReference>
<dbReference type="GeneID" id="361419"/>
<dbReference type="KEGG" id="rno:361419"/>
<dbReference type="UCSC" id="RGD:1310542">
    <property type="organism name" value="rat"/>
</dbReference>
<dbReference type="AGR" id="RGD:1310542"/>
<dbReference type="CTD" id="123872"/>
<dbReference type="RGD" id="1310542">
    <property type="gene designation" value="Dnaaf1"/>
</dbReference>
<dbReference type="eggNOG" id="ENOG502QQFE">
    <property type="taxonomic scope" value="Eukaryota"/>
</dbReference>
<dbReference type="GeneTree" id="ENSGT00940000158494"/>
<dbReference type="HOGENOM" id="CLU_027574_0_0_1"/>
<dbReference type="InParanoid" id="Q6AYH9"/>
<dbReference type="OrthoDB" id="1904536at2759"/>
<dbReference type="PhylomeDB" id="Q6AYH9"/>
<dbReference type="TreeFam" id="TF315818"/>
<dbReference type="PRO" id="PR:Q6AYH9"/>
<dbReference type="Proteomes" id="UP000002494">
    <property type="component" value="Chromosome 19"/>
</dbReference>
<dbReference type="Bgee" id="ENSRNOG00000015590">
    <property type="expression patterns" value="Expressed in testis and 8 other cell types or tissues"/>
</dbReference>
<dbReference type="ExpressionAtlas" id="Q6AYH9">
    <property type="expression patterns" value="baseline and differential"/>
</dbReference>
<dbReference type="GO" id="GO:0005930">
    <property type="term" value="C:axoneme"/>
    <property type="evidence" value="ECO:0000250"/>
    <property type="project" value="UniProtKB"/>
</dbReference>
<dbReference type="GO" id="GO:0070840">
    <property type="term" value="F:dynein complex binding"/>
    <property type="evidence" value="ECO:0000250"/>
    <property type="project" value="UniProtKB"/>
</dbReference>
<dbReference type="GO" id="GO:0070286">
    <property type="term" value="P:axonemal dynein complex assembly"/>
    <property type="evidence" value="ECO:0000266"/>
    <property type="project" value="RGD"/>
</dbReference>
<dbReference type="GO" id="GO:0035082">
    <property type="term" value="P:axoneme assembly"/>
    <property type="evidence" value="ECO:0000318"/>
    <property type="project" value="GO_Central"/>
</dbReference>
<dbReference type="GO" id="GO:0060271">
    <property type="term" value="P:cilium assembly"/>
    <property type="evidence" value="ECO:0000250"/>
    <property type="project" value="UniProtKB"/>
</dbReference>
<dbReference type="GO" id="GO:0003341">
    <property type="term" value="P:cilium movement"/>
    <property type="evidence" value="ECO:0000266"/>
    <property type="project" value="RGD"/>
</dbReference>
<dbReference type="GO" id="GO:0071907">
    <property type="term" value="P:determination of digestive tract left/right asymmetry"/>
    <property type="evidence" value="ECO:0000266"/>
    <property type="project" value="RGD"/>
</dbReference>
<dbReference type="GO" id="GO:0071910">
    <property type="term" value="P:determination of liver left/right asymmetry"/>
    <property type="evidence" value="ECO:0000266"/>
    <property type="project" value="RGD"/>
</dbReference>
<dbReference type="GO" id="GO:0035469">
    <property type="term" value="P:determination of pancreatic left/right asymmetry"/>
    <property type="evidence" value="ECO:0000266"/>
    <property type="project" value="RGD"/>
</dbReference>
<dbReference type="GO" id="GO:0001947">
    <property type="term" value="P:heart looping"/>
    <property type="evidence" value="ECO:0000266"/>
    <property type="project" value="RGD"/>
</dbReference>
<dbReference type="GO" id="GO:0036159">
    <property type="term" value="P:inner dynein arm assembly"/>
    <property type="evidence" value="ECO:0000266"/>
    <property type="project" value="RGD"/>
</dbReference>
<dbReference type="GO" id="GO:0060972">
    <property type="term" value="P:left/right pattern formation"/>
    <property type="evidence" value="ECO:0000266"/>
    <property type="project" value="RGD"/>
</dbReference>
<dbReference type="GO" id="GO:0030324">
    <property type="term" value="P:lung development"/>
    <property type="evidence" value="ECO:0000266"/>
    <property type="project" value="RGD"/>
</dbReference>
<dbReference type="GO" id="GO:0044458">
    <property type="term" value="P:motile cilium assembly"/>
    <property type="evidence" value="ECO:0000266"/>
    <property type="project" value="RGD"/>
</dbReference>
<dbReference type="GO" id="GO:0036158">
    <property type="term" value="P:outer dynein arm assembly"/>
    <property type="evidence" value="ECO:0000266"/>
    <property type="project" value="RGD"/>
</dbReference>
<dbReference type="GO" id="GO:0003356">
    <property type="term" value="P:regulation of cilium beat frequency"/>
    <property type="evidence" value="ECO:0000266"/>
    <property type="project" value="RGD"/>
</dbReference>
<dbReference type="FunFam" id="3.80.10.10:FF:000349">
    <property type="entry name" value="Dynein assembly factor 1, axonemal"/>
    <property type="match status" value="1"/>
</dbReference>
<dbReference type="FunFam" id="3.80.10.10:FF:000394">
    <property type="entry name" value="Dynein assembly factor 1, axonemal"/>
    <property type="match status" value="1"/>
</dbReference>
<dbReference type="Gene3D" id="3.80.10.10">
    <property type="entry name" value="Ribonuclease Inhibitor"/>
    <property type="match status" value="2"/>
</dbReference>
<dbReference type="InterPro" id="IPR050576">
    <property type="entry name" value="Cilia_flagella_integrity"/>
</dbReference>
<dbReference type="InterPro" id="IPR001611">
    <property type="entry name" value="Leu-rich_rpt"/>
</dbReference>
<dbReference type="InterPro" id="IPR032675">
    <property type="entry name" value="LRR_dom_sf"/>
</dbReference>
<dbReference type="PANTHER" id="PTHR45973:SF19">
    <property type="entry name" value="DYNEIN AXONEMAL ASSEMBLY FACTOR 1"/>
    <property type="match status" value="1"/>
</dbReference>
<dbReference type="PANTHER" id="PTHR45973">
    <property type="entry name" value="PROTEIN PHOSPHATASE 1 REGULATORY SUBUNIT SDS22-RELATED"/>
    <property type="match status" value="1"/>
</dbReference>
<dbReference type="Pfam" id="PF14580">
    <property type="entry name" value="LRR_9"/>
    <property type="match status" value="1"/>
</dbReference>
<dbReference type="SMART" id="SM00365">
    <property type="entry name" value="LRR_SD22"/>
    <property type="match status" value="4"/>
</dbReference>
<dbReference type="SUPFAM" id="SSF52075">
    <property type="entry name" value="Outer arm dynein light chain 1"/>
    <property type="match status" value="1"/>
</dbReference>
<dbReference type="PROSITE" id="PS51450">
    <property type="entry name" value="LRR"/>
    <property type="match status" value="6"/>
</dbReference>
<organism>
    <name type="scientific">Rattus norvegicus</name>
    <name type="common">Rat</name>
    <dbReference type="NCBI Taxonomy" id="10116"/>
    <lineage>
        <taxon>Eukaryota</taxon>
        <taxon>Metazoa</taxon>
        <taxon>Chordata</taxon>
        <taxon>Craniata</taxon>
        <taxon>Vertebrata</taxon>
        <taxon>Euteleostomi</taxon>
        <taxon>Mammalia</taxon>
        <taxon>Eutheria</taxon>
        <taxon>Euarchontoglires</taxon>
        <taxon>Glires</taxon>
        <taxon>Rodentia</taxon>
        <taxon>Myomorpha</taxon>
        <taxon>Muroidea</taxon>
        <taxon>Muridae</taxon>
        <taxon>Murinae</taxon>
        <taxon>Rattus</taxon>
    </lineage>
</organism>
<comment type="function">
    <text evidence="1">Cilium-specific protein required for the stability of the ciliary architecture. Plays a role in cytoplasmic preassembly of dynein arms (By similarity). Involved in regulation of microtubule-based cilia and actin-based brush border microvilli (By similarity).</text>
</comment>
<comment type="subcellular location">
    <subcellularLocation>
        <location evidence="1">Cell projection</location>
        <location evidence="1">Cilium</location>
    </subcellularLocation>
</comment>
<comment type="similarity">
    <text evidence="3">Belongs to the DNAAF1 family.</text>
</comment>
<proteinExistence type="evidence at protein level"/>
<sequence length="633" mass="69956">MHPEASEPPVDSAAEPSLEESAGDHGDAGPGVRKEEINETKETCVGPCTTSCQSQQQPSGDNGSDGLFTHSRDDRDDRGPRMTKQFLQKLCKQHKLYVTPALNDTLYLHFKGFDRIENLEEYTGLRCLWLECNGIQRIENLQAQSELRCLFLQVNLLHKIENLEPLQKLDALNLSNNYIKTIENLSCLPVLNTLQMAHNRLETVADIEHLRECLQLCVLDLSHNSLSDPEILSVLETMPCLRVLNLMGNPVTKHIPNYRRTVTVRLKHLTYLDDRPVFPKDRACAEAWARGGYAAEKEERHQWESREHKKITDSLEALAMIKRRAEERKKARDRGETPLPESEKSIPTSPEAQEKPPKGETQQKMESFVKESFEAKDELFPEKPGEGEELSVVVGNRAVEDADLSGNLAHTQTPVVVTPEEVTSPVEATDGARTEDTEAIALETKEKLFIDDLPDLEDVDGTDVSVEDQTKDTGIRKIQAISSLSDDSDLELEELPLSVFEGTPISPTGALSHIFAVSKDPSEAARVPFADICMPTATTDLETQSQDPSTASSHPLIQELGEDELTEGESNQPLPPQSCASDPTLAQSSEGGDSQLPAATPLGDGAENEAQSSLYPEEPSTRIGLEDIEFGLD</sequence>
<feature type="chain" id="PRO_0000232891" description="Dynein axonemal assembly factor 1">
    <location>
        <begin position="1"/>
        <end position="633"/>
    </location>
</feature>
<feature type="repeat" description="LRR 1">
    <location>
        <begin position="101"/>
        <end position="123"/>
    </location>
</feature>
<feature type="repeat" description="LRR 2">
    <location>
        <begin position="124"/>
        <end position="145"/>
    </location>
</feature>
<feature type="repeat" description="LRR 3">
    <location>
        <begin position="146"/>
        <end position="167"/>
    </location>
</feature>
<feature type="repeat" description="LRR 4">
    <location>
        <begin position="168"/>
        <end position="189"/>
    </location>
</feature>
<feature type="repeat" description="LRR 5">
    <location>
        <begin position="190"/>
        <end position="211"/>
    </location>
</feature>
<feature type="repeat" description="LRR 6">
    <location>
        <begin position="215"/>
        <end position="236"/>
    </location>
</feature>
<feature type="domain" description="LRRCT">
    <location>
        <begin position="249"/>
        <end position="288"/>
    </location>
</feature>
<feature type="region of interest" description="Disordered" evidence="2">
    <location>
        <begin position="1"/>
        <end position="80"/>
    </location>
</feature>
<feature type="region of interest" description="Disordered" evidence="2">
    <location>
        <begin position="326"/>
        <end position="364"/>
    </location>
</feature>
<feature type="region of interest" description="Disordered" evidence="2">
    <location>
        <begin position="404"/>
        <end position="436"/>
    </location>
</feature>
<feature type="region of interest" description="Disordered" evidence="2">
    <location>
        <begin position="538"/>
        <end position="633"/>
    </location>
</feature>
<feature type="compositionally biased region" description="Basic and acidic residues" evidence="2">
    <location>
        <begin position="22"/>
        <end position="42"/>
    </location>
</feature>
<feature type="compositionally biased region" description="Low complexity" evidence="2">
    <location>
        <begin position="46"/>
        <end position="60"/>
    </location>
</feature>
<feature type="compositionally biased region" description="Basic and acidic residues" evidence="2">
    <location>
        <begin position="70"/>
        <end position="80"/>
    </location>
</feature>
<feature type="compositionally biased region" description="Basic and acidic residues" evidence="2">
    <location>
        <begin position="326"/>
        <end position="344"/>
    </location>
</feature>
<feature type="compositionally biased region" description="Basic and acidic residues" evidence="2">
    <location>
        <begin position="352"/>
        <end position="364"/>
    </location>
</feature>
<feature type="compositionally biased region" description="Low complexity" evidence="2">
    <location>
        <begin position="413"/>
        <end position="427"/>
    </location>
</feature>
<feature type="compositionally biased region" description="Polar residues" evidence="2">
    <location>
        <begin position="538"/>
        <end position="555"/>
    </location>
</feature>
<feature type="compositionally biased region" description="Polar residues" evidence="2">
    <location>
        <begin position="568"/>
        <end position="592"/>
    </location>
</feature>
<feature type="modified residue" description="Phosphoserine" evidence="4">
    <location>
        <position position="349"/>
    </location>
</feature>
<feature type="modified residue" description="Phosphothreonine" evidence="4">
    <location>
        <position position="462"/>
    </location>
</feature>
<feature type="modified residue" description="Phosphoserine" evidence="4">
    <location>
        <position position="465"/>
    </location>
</feature>
<feature type="modified residue" description="Phosphoserine" evidence="4">
    <location>
        <position position="488"/>
    </location>
</feature>